<evidence type="ECO:0000250" key="1">
    <source>
        <dbReference type="UniProtKB" id="O43597"/>
    </source>
</evidence>
<evidence type="ECO:0000250" key="2">
    <source>
        <dbReference type="UniProtKB" id="Q9QXV8"/>
    </source>
</evidence>
<evidence type="ECO:0000255" key="3">
    <source>
        <dbReference type="PROSITE-ProRule" id="PRU00572"/>
    </source>
</evidence>
<evidence type="ECO:0000256" key="4">
    <source>
        <dbReference type="SAM" id="MobiDB-lite"/>
    </source>
</evidence>
<evidence type="ECO:0000269" key="5">
    <source>
    </source>
</evidence>
<evidence type="ECO:0000269" key="6">
    <source>
    </source>
</evidence>
<evidence type="ECO:0000305" key="7"/>
<name>SPY2_CHICK</name>
<sequence length="313" mass="34417">METRVQHGSGSQALLQARRDSGRPHGEPDLRDVLTQQVHILSLDQIRAIRNTNEYTEGPTVAPRPGVKSAPRSASQPKSERPHGLPEHRHFGRVQHTQTHASPRAPLSRSISTVSTGSRSSTRTSTSSNSSEQRLLGSSSGPVADGIVRMQPKSELKSSELKPLSKEDLGAHSYRCEDCGKCKCKECTYPRTLPSCWICDKQCLCSAQNVVDYGTCVCCVKGLFYHCSNDDEDNCADNPCSCSQSHCCTRWSAMGVVSLFLPCLWCYLPAKGCLKLCQGCYDRVNRPGCRCKHSNTVCCKVPSVPPRNFEKPT</sequence>
<organism>
    <name type="scientific">Gallus gallus</name>
    <name type="common">Chicken</name>
    <dbReference type="NCBI Taxonomy" id="9031"/>
    <lineage>
        <taxon>Eukaryota</taxon>
        <taxon>Metazoa</taxon>
        <taxon>Chordata</taxon>
        <taxon>Craniata</taxon>
        <taxon>Vertebrata</taxon>
        <taxon>Euteleostomi</taxon>
        <taxon>Archelosauria</taxon>
        <taxon>Archosauria</taxon>
        <taxon>Dinosauria</taxon>
        <taxon>Saurischia</taxon>
        <taxon>Theropoda</taxon>
        <taxon>Coelurosauria</taxon>
        <taxon>Aves</taxon>
        <taxon>Neognathae</taxon>
        <taxon>Galloanserae</taxon>
        <taxon>Galliformes</taxon>
        <taxon>Phasianidae</taxon>
        <taxon>Phasianinae</taxon>
        <taxon>Gallus</taxon>
    </lineage>
</organism>
<gene>
    <name type="primary">SPRY2</name>
</gene>
<proteinExistence type="evidence at transcript level"/>
<comment type="function">
    <text evidence="2 6">Acts as an antagonist of FGF-induced retinal lens fiber differentiation (By similarity). Inhibits TGFB-induced epithelial-to-mesenchymal transition in retinal lens epithelial cells (By similarity). May play an important role in FGF-mediated patterning of the mid/hindbrain region by acting to modulate the signaling effects of FGF8 (PubMed:10662503).</text>
</comment>
<comment type="subcellular location">
    <subcellularLocation>
        <location evidence="1">Cytoplasm</location>
    </subcellularLocation>
    <subcellularLocation>
        <location evidence="1">Membrane</location>
        <topology evidence="1">Peripheral membrane protein</topology>
    </subcellularLocation>
    <text evidence="1">Found in the cytoplasm in unstimulated cells but is translocated to the membrane ruffles in cells stimulated with EGF (epidermal growth factor).</text>
</comment>
<comment type="tissue specificity">
    <text>Brain and interlimb region.</text>
</comment>
<comment type="developmental stage">
    <text evidence="6">At the 4- to 5-somite stage (4/5S) found in the embryo in scattered cells across the neural plate in the presumptive mid/ hindbrain region (PubMed:10662503). At 7/8S found in the isthmus and throughout the presumptive r1 territory. Between 10-14S stage found throughout the R1 region and at the isthmic constriction (PubMed:10662503). By 26S the anterior limit of expression extends into the posterior midbrain region and this pattern of expression is maintained at later stages (PubMed:10662503).</text>
</comment>
<comment type="induction">
    <text evidence="5 6">By FGF signaling.</text>
</comment>
<comment type="domain">
    <text>The Cys-rich domain is responsible for the localization of the protein to the membrane ruffles.</text>
</comment>
<comment type="similarity">
    <text evidence="7">Belongs to the sprouty family.</text>
</comment>
<keyword id="KW-0963">Cytoplasm</keyword>
<keyword id="KW-0217">Developmental protein</keyword>
<keyword id="KW-0472">Membrane</keyword>
<keyword id="KW-1185">Reference proteome</keyword>
<reference key="1">
    <citation type="journal article" date="1999" name="Development">
        <title>Vertebrate sprouty genes are induced by FGF signaling and can cause chondrodysplasia when overexpressed.</title>
        <authorList>
            <person name="Minowada G."/>
            <person name="Jarvis L.A."/>
            <person name="Chi C.L."/>
            <person name="Neubueser A."/>
            <person name="Sun X."/>
            <person name="Hacohen N."/>
            <person name="Krasnow M.A."/>
            <person name="Martin G.R."/>
        </authorList>
    </citation>
    <scope>NUCLEOTIDE SEQUENCE [MRNA]</scope>
    <scope>INDUCTION BY FGF</scope>
</reference>
<reference key="2">
    <citation type="journal article" date="2000" name="Mol. Cell. Neurosci.">
        <title>Differential display of genes expressed at the midbrain-hindbrain junction identifies sprouty2: an FGF8-inducible member of a family of intracellular FGF antagonists.</title>
        <authorList>
            <person name="Chambers D."/>
            <person name="Medhurst A.D."/>
            <person name="Walsh F.S."/>
            <person name="Price J."/>
            <person name="Mason I."/>
        </authorList>
    </citation>
    <scope>NUCLEOTIDE SEQUENCE [MRNA]</scope>
    <scope>FUNCTION</scope>
    <scope>DEVELOPMENTAL STAGE</scope>
    <scope>INDUCTION BY FGF</scope>
    <source>
        <tissue>Embryo</tissue>
    </source>
</reference>
<accession>Q9PTL2</accession>
<protein>
    <recommendedName>
        <fullName>Protein sprouty homolog 2</fullName>
        <shortName>Spry-2</shortName>
    </recommendedName>
</protein>
<dbReference type="EMBL" id="AF176904">
    <property type="protein sequence ID" value="AAD56005.1"/>
    <property type="molecule type" value="mRNA"/>
</dbReference>
<dbReference type="RefSeq" id="NP_990131.1">
    <property type="nucleotide sequence ID" value="NM_204800.1"/>
</dbReference>
<dbReference type="RefSeq" id="XP_046762602.1">
    <property type="nucleotide sequence ID" value="XM_046906646.1"/>
</dbReference>
<dbReference type="RefSeq" id="XP_046762603.1">
    <property type="nucleotide sequence ID" value="XM_046906647.1"/>
</dbReference>
<dbReference type="RefSeq" id="XP_046762604.1">
    <property type="nucleotide sequence ID" value="XM_046906648.1"/>
</dbReference>
<dbReference type="SMR" id="Q9PTL2"/>
<dbReference type="FunCoup" id="Q9PTL2">
    <property type="interactions" value="268"/>
</dbReference>
<dbReference type="STRING" id="9031.ENSGALP00000027276"/>
<dbReference type="GlyGen" id="Q9PTL2">
    <property type="glycosylation" value="1 site"/>
</dbReference>
<dbReference type="PaxDb" id="9031-ENSGALP00000027276"/>
<dbReference type="GeneID" id="395584"/>
<dbReference type="KEGG" id="gga:395584"/>
<dbReference type="CTD" id="10253"/>
<dbReference type="VEuPathDB" id="HostDB:geneid_395584"/>
<dbReference type="eggNOG" id="ENOG502QTG8">
    <property type="taxonomic scope" value="Eukaryota"/>
</dbReference>
<dbReference type="InParanoid" id="Q9PTL2"/>
<dbReference type="OrthoDB" id="10038884at2759"/>
<dbReference type="PhylomeDB" id="Q9PTL2"/>
<dbReference type="PRO" id="PR:Q9PTL2"/>
<dbReference type="Proteomes" id="UP000000539">
    <property type="component" value="Unassembled WGS sequence"/>
</dbReference>
<dbReference type="GO" id="GO:0005829">
    <property type="term" value="C:cytosol"/>
    <property type="evidence" value="ECO:0000318"/>
    <property type="project" value="GO_Central"/>
</dbReference>
<dbReference type="GO" id="GO:0016020">
    <property type="term" value="C:membrane"/>
    <property type="evidence" value="ECO:0007669"/>
    <property type="project" value="UniProtKB-SubCell"/>
</dbReference>
<dbReference type="GO" id="GO:0048513">
    <property type="term" value="P:animal organ development"/>
    <property type="evidence" value="ECO:0000318"/>
    <property type="project" value="GO_Central"/>
</dbReference>
<dbReference type="GO" id="GO:0070373">
    <property type="term" value="P:negative regulation of ERK1 and ERK2 cascade"/>
    <property type="evidence" value="ECO:0000318"/>
    <property type="project" value="GO_Central"/>
</dbReference>
<dbReference type="GO" id="GO:0040037">
    <property type="term" value="P:negative regulation of fibroblast growth factor receptor signaling pathway"/>
    <property type="evidence" value="ECO:0000318"/>
    <property type="project" value="GO_Central"/>
</dbReference>
<dbReference type="GO" id="GO:0046580">
    <property type="term" value="P:negative regulation of Ras protein signal transduction"/>
    <property type="evidence" value="ECO:0000318"/>
    <property type="project" value="GO_Central"/>
</dbReference>
<dbReference type="InterPro" id="IPR007875">
    <property type="entry name" value="Sprouty"/>
</dbReference>
<dbReference type="InterPro" id="IPR051192">
    <property type="entry name" value="Sprouty_domain"/>
</dbReference>
<dbReference type="PANTHER" id="PTHR12365:SF8">
    <property type="entry name" value="PROTEIN SPROUTY HOMOLOG 2"/>
    <property type="match status" value="1"/>
</dbReference>
<dbReference type="PANTHER" id="PTHR12365">
    <property type="entry name" value="SPROUTY"/>
    <property type="match status" value="1"/>
</dbReference>
<dbReference type="Pfam" id="PF05210">
    <property type="entry name" value="Sprouty"/>
    <property type="match status" value="1"/>
</dbReference>
<dbReference type="PROSITE" id="PS51227">
    <property type="entry name" value="SPR"/>
    <property type="match status" value="1"/>
</dbReference>
<feature type="chain" id="PRO_0000076903" description="Protein sprouty homolog 2">
    <location>
        <begin position="1"/>
        <end position="313"/>
    </location>
</feature>
<feature type="domain" description="SPR" evidence="3">
    <location>
        <begin position="175"/>
        <end position="289"/>
    </location>
</feature>
<feature type="region of interest" description="Disordered" evidence="4">
    <location>
        <begin position="1"/>
        <end position="31"/>
    </location>
</feature>
<feature type="region of interest" description="Disordered" evidence="4">
    <location>
        <begin position="54"/>
        <end position="146"/>
    </location>
</feature>
<feature type="compositionally biased region" description="Polar residues" evidence="4">
    <location>
        <begin position="1"/>
        <end position="14"/>
    </location>
</feature>
<feature type="compositionally biased region" description="Basic and acidic residues" evidence="4">
    <location>
        <begin position="17"/>
        <end position="31"/>
    </location>
</feature>
<feature type="compositionally biased region" description="Basic and acidic residues" evidence="4">
    <location>
        <begin position="78"/>
        <end position="89"/>
    </location>
</feature>
<feature type="compositionally biased region" description="Low complexity" evidence="4">
    <location>
        <begin position="108"/>
        <end position="131"/>
    </location>
</feature>
<feature type="compositionally biased region" description="Polar residues" evidence="4">
    <location>
        <begin position="132"/>
        <end position="141"/>
    </location>
</feature>